<evidence type="ECO:0000250" key="1"/>
<evidence type="ECO:0000250" key="2">
    <source>
        <dbReference type="UniProtKB" id="Q15170"/>
    </source>
</evidence>
<evidence type="ECO:0000256" key="3">
    <source>
        <dbReference type="SAM" id="MobiDB-lite"/>
    </source>
</evidence>
<evidence type="ECO:0000305" key="4"/>
<name>TCAL1_MACNE</name>
<comment type="function">
    <text evidence="1">May be involved in transcriptional regulation. Modulates various viral and cellular promoters in a promoter context-dependent manner. Does not bind DNA directly (By similarity).</text>
</comment>
<comment type="subcellular location">
    <subcellularLocation>
        <location evidence="1">Nucleus</location>
    </subcellularLocation>
</comment>
<comment type="similarity">
    <text evidence="4">Belongs to the TFS-II family. TFA subfamily.</text>
</comment>
<dbReference type="EMBL" id="DQ977101">
    <property type="protein sequence ID" value="ABM88057.1"/>
    <property type="molecule type" value="Genomic_DNA"/>
</dbReference>
<dbReference type="RefSeq" id="XP_011770893.1">
    <property type="nucleotide sequence ID" value="XM_011772591.1"/>
</dbReference>
<dbReference type="RefSeq" id="XP_011770894.1">
    <property type="nucleotide sequence ID" value="XM_011772592.1"/>
</dbReference>
<dbReference type="STRING" id="9545.ENSMNEP00000028355"/>
<dbReference type="Ensembl" id="ENSMNET00000052687.1">
    <property type="protein sequence ID" value="ENSMNEP00000028355.1"/>
    <property type="gene ID" value="ENSMNEG00000037619.1"/>
</dbReference>
<dbReference type="GeneID" id="105499788"/>
<dbReference type="KEGG" id="mni:105499788"/>
<dbReference type="GeneTree" id="ENSGT00950000183164"/>
<dbReference type="OMA" id="HWKAKRN"/>
<dbReference type="OrthoDB" id="16041at314294"/>
<dbReference type="Proteomes" id="UP000233120">
    <property type="component" value="Unassembled WGS sequence"/>
</dbReference>
<dbReference type="Bgee" id="ENSMNEG00000037619">
    <property type="expression patterns" value="Expressed in pituitary gland and 12 other cell types or tissues"/>
</dbReference>
<dbReference type="GO" id="GO:0005654">
    <property type="term" value="C:nucleoplasm"/>
    <property type="evidence" value="ECO:0007669"/>
    <property type="project" value="Ensembl"/>
</dbReference>
<dbReference type="InterPro" id="IPR021156">
    <property type="entry name" value="TF_A-like/BEX"/>
</dbReference>
<dbReference type="Pfam" id="PF04538">
    <property type="entry name" value="BEX"/>
    <property type="match status" value="1"/>
</dbReference>
<gene>
    <name evidence="2" type="primary">TCEAL1</name>
</gene>
<reference key="1">
    <citation type="submission" date="2006-08" db="EMBL/GenBank/DDBJ databases">
        <title>Positive selection in transcription factor genes on the human lineage.</title>
        <authorList>
            <person name="Nickel G.C."/>
            <person name="Tefft D.L."/>
            <person name="Trevarthen K."/>
            <person name="Funt J."/>
            <person name="Adams M.D."/>
        </authorList>
    </citation>
    <scope>NUCLEOTIDE SEQUENCE [GENOMIC DNA]</scope>
</reference>
<feature type="chain" id="PRO_0000285501" description="Transcription elongation factor A protein-like 1">
    <location>
        <begin position="1"/>
        <end position="159"/>
    </location>
</feature>
<feature type="region of interest" description="Disordered" evidence="3">
    <location>
        <begin position="1"/>
        <end position="99"/>
    </location>
</feature>
<feature type="compositionally biased region" description="Basic and acidic residues" evidence="3">
    <location>
        <begin position="17"/>
        <end position="34"/>
    </location>
</feature>
<feature type="compositionally biased region" description="Acidic residues" evidence="3">
    <location>
        <begin position="37"/>
        <end position="54"/>
    </location>
</feature>
<feature type="compositionally biased region" description="Basic and acidic residues" evidence="3">
    <location>
        <begin position="64"/>
        <end position="80"/>
    </location>
</feature>
<keyword id="KW-0539">Nucleus</keyword>
<keyword id="KW-1185">Reference proteome</keyword>
<keyword id="KW-0804">Transcription</keyword>
<keyword id="KW-0805">Transcription regulation</keyword>
<proteinExistence type="inferred from homology"/>
<protein>
    <recommendedName>
        <fullName evidence="2">Transcription elongation factor A protein-like 1</fullName>
        <shortName>TCEA-like protein 1</shortName>
    </recommendedName>
    <alternativeName>
        <fullName>Transcription elongation factor S-II protein-like 1</fullName>
    </alternativeName>
</protein>
<sequence length="159" mass="18657">MDKPRKENEEEPQSAPKTDEERPPVEHSPEKQSLEEQSSEEQSSEEEFFPEELLPELLPEMLLSEERPPQEGLSRKDLFEGRPPMEQPPCGVGKHKLEEGSFKERLARSRPQFRGDIHGRNLSNEEMIQAADELEEMKRVRNKLMIMHWKAKRSRPYPI</sequence>
<organism>
    <name type="scientific">Macaca nemestrina</name>
    <name type="common">Pig-tailed macaque</name>
    <dbReference type="NCBI Taxonomy" id="9545"/>
    <lineage>
        <taxon>Eukaryota</taxon>
        <taxon>Metazoa</taxon>
        <taxon>Chordata</taxon>
        <taxon>Craniata</taxon>
        <taxon>Vertebrata</taxon>
        <taxon>Euteleostomi</taxon>
        <taxon>Mammalia</taxon>
        <taxon>Eutheria</taxon>
        <taxon>Euarchontoglires</taxon>
        <taxon>Primates</taxon>
        <taxon>Haplorrhini</taxon>
        <taxon>Catarrhini</taxon>
        <taxon>Cercopithecidae</taxon>
        <taxon>Cercopithecinae</taxon>
        <taxon>Macaca</taxon>
    </lineage>
</organism>
<accession>A2T6K9</accession>